<comment type="function">
    <text evidence="1">Required for the expression of anaerobic nitric oxide (NO) reductase, acts as a transcriptional activator for at least the norVW operon. Activation also requires sigma-54.</text>
</comment>
<comment type="pathway">
    <text evidence="1">Nitrogen metabolism; nitric oxide reduction.</text>
</comment>
<organism>
    <name type="scientific">Aliivibrio fischeri (strain ATCC 700601 / ES114)</name>
    <name type="common">Vibrio fischeri</name>
    <dbReference type="NCBI Taxonomy" id="312309"/>
    <lineage>
        <taxon>Bacteria</taxon>
        <taxon>Pseudomonadati</taxon>
        <taxon>Pseudomonadota</taxon>
        <taxon>Gammaproteobacteria</taxon>
        <taxon>Vibrionales</taxon>
        <taxon>Vibrionaceae</taxon>
        <taxon>Aliivibrio</taxon>
    </lineage>
</organism>
<evidence type="ECO:0000255" key="1">
    <source>
        <dbReference type="HAMAP-Rule" id="MF_01314"/>
    </source>
</evidence>
<feature type="chain" id="PRO_0000305628" description="Anaerobic nitric oxide reductase transcription regulator NorR">
    <location>
        <begin position="1"/>
        <end position="512"/>
    </location>
</feature>
<feature type="domain" description="Sigma-54 factor interaction" evidence="1">
    <location>
        <begin position="190"/>
        <end position="419"/>
    </location>
</feature>
<feature type="DNA-binding region" description="H-T-H motif" evidence="1">
    <location>
        <begin position="487"/>
        <end position="506"/>
    </location>
</feature>
<feature type="binding site" evidence="1">
    <location>
        <begin position="218"/>
        <end position="225"/>
    </location>
    <ligand>
        <name>ATP</name>
        <dbReference type="ChEBI" id="CHEBI:30616"/>
    </ligand>
</feature>
<feature type="binding site" evidence="1">
    <location>
        <begin position="281"/>
        <end position="290"/>
    </location>
    <ligand>
        <name>ATP</name>
        <dbReference type="ChEBI" id="CHEBI:30616"/>
    </ligand>
</feature>
<dbReference type="EMBL" id="CP000020">
    <property type="protein sequence ID" value="AAW86278.1"/>
    <property type="molecule type" value="Genomic_DNA"/>
</dbReference>
<dbReference type="RefSeq" id="WP_011262315.1">
    <property type="nucleotide sequence ID" value="NC_006840.2"/>
</dbReference>
<dbReference type="RefSeq" id="YP_205166.1">
    <property type="nucleotide sequence ID" value="NC_006840.2"/>
</dbReference>
<dbReference type="SMR" id="Q5E3W8"/>
<dbReference type="STRING" id="312309.VF_1783"/>
<dbReference type="DNASU" id="3279017"/>
<dbReference type="EnsemblBacteria" id="AAW86278">
    <property type="protein sequence ID" value="AAW86278"/>
    <property type="gene ID" value="VF_1783"/>
</dbReference>
<dbReference type="GeneID" id="54164483"/>
<dbReference type="KEGG" id="vfi:VF_1783"/>
<dbReference type="PATRIC" id="fig|312309.11.peg.1809"/>
<dbReference type="eggNOG" id="COG3604">
    <property type="taxonomic scope" value="Bacteria"/>
</dbReference>
<dbReference type="HOGENOM" id="CLU_000445_125_3_6"/>
<dbReference type="OrthoDB" id="9804019at2"/>
<dbReference type="UniPathway" id="UPA00638"/>
<dbReference type="Proteomes" id="UP000000537">
    <property type="component" value="Chromosome I"/>
</dbReference>
<dbReference type="GO" id="GO:0005524">
    <property type="term" value="F:ATP binding"/>
    <property type="evidence" value="ECO:0007669"/>
    <property type="project" value="UniProtKB-UniRule"/>
</dbReference>
<dbReference type="GO" id="GO:0016887">
    <property type="term" value="F:ATP hydrolysis activity"/>
    <property type="evidence" value="ECO:0007669"/>
    <property type="project" value="InterPro"/>
</dbReference>
<dbReference type="GO" id="GO:0003677">
    <property type="term" value="F:DNA binding"/>
    <property type="evidence" value="ECO:0007669"/>
    <property type="project" value="UniProtKB-KW"/>
</dbReference>
<dbReference type="GO" id="GO:0003700">
    <property type="term" value="F:DNA-binding transcription factor activity"/>
    <property type="evidence" value="ECO:0007669"/>
    <property type="project" value="UniProtKB-UniRule"/>
</dbReference>
<dbReference type="GO" id="GO:0000160">
    <property type="term" value="P:phosphorelay signal transduction system"/>
    <property type="evidence" value="ECO:0007669"/>
    <property type="project" value="UniProtKB-UniRule"/>
</dbReference>
<dbReference type="CDD" id="cd00009">
    <property type="entry name" value="AAA"/>
    <property type="match status" value="1"/>
</dbReference>
<dbReference type="FunFam" id="3.40.50.300:FF:000006">
    <property type="entry name" value="DNA-binding transcriptional regulator NtrC"/>
    <property type="match status" value="1"/>
</dbReference>
<dbReference type="Gene3D" id="1.10.8.60">
    <property type="match status" value="1"/>
</dbReference>
<dbReference type="Gene3D" id="3.30.450.40">
    <property type="match status" value="1"/>
</dbReference>
<dbReference type="Gene3D" id="1.10.10.60">
    <property type="entry name" value="Homeodomain-like"/>
    <property type="match status" value="1"/>
</dbReference>
<dbReference type="Gene3D" id="3.40.50.300">
    <property type="entry name" value="P-loop containing nucleotide triphosphate hydrolases"/>
    <property type="match status" value="1"/>
</dbReference>
<dbReference type="HAMAP" id="MF_01314">
    <property type="entry name" value="NorR"/>
    <property type="match status" value="1"/>
</dbReference>
<dbReference type="InterPro" id="IPR003593">
    <property type="entry name" value="AAA+_ATPase"/>
</dbReference>
<dbReference type="InterPro" id="IPR003018">
    <property type="entry name" value="GAF"/>
</dbReference>
<dbReference type="InterPro" id="IPR029016">
    <property type="entry name" value="GAF-like_dom_sf"/>
</dbReference>
<dbReference type="InterPro" id="IPR009057">
    <property type="entry name" value="Homeodomain-like_sf"/>
</dbReference>
<dbReference type="InterPro" id="IPR023944">
    <property type="entry name" value="NorR"/>
</dbReference>
<dbReference type="InterPro" id="IPR027417">
    <property type="entry name" value="P-loop_NTPase"/>
</dbReference>
<dbReference type="InterPro" id="IPR002078">
    <property type="entry name" value="Sigma_54_int"/>
</dbReference>
<dbReference type="InterPro" id="IPR025662">
    <property type="entry name" value="Sigma_54_int_dom_ATP-bd_1"/>
</dbReference>
<dbReference type="InterPro" id="IPR025943">
    <property type="entry name" value="Sigma_54_int_dom_ATP-bd_2"/>
</dbReference>
<dbReference type="InterPro" id="IPR025944">
    <property type="entry name" value="Sigma_54_int_dom_CS"/>
</dbReference>
<dbReference type="NCBIfam" id="NF003451">
    <property type="entry name" value="PRK05022.1"/>
    <property type="match status" value="1"/>
</dbReference>
<dbReference type="PANTHER" id="PTHR32071:SF35">
    <property type="entry name" value="ANAEROBIC NITRIC OXIDE REDUCTASE TRANSCRIPTION REGULATOR NORR"/>
    <property type="match status" value="1"/>
</dbReference>
<dbReference type="PANTHER" id="PTHR32071">
    <property type="entry name" value="TRANSCRIPTIONAL REGULATORY PROTEIN"/>
    <property type="match status" value="1"/>
</dbReference>
<dbReference type="Pfam" id="PF01590">
    <property type="entry name" value="GAF"/>
    <property type="match status" value="1"/>
</dbReference>
<dbReference type="Pfam" id="PF00158">
    <property type="entry name" value="Sigma54_activat"/>
    <property type="match status" value="1"/>
</dbReference>
<dbReference type="SMART" id="SM00382">
    <property type="entry name" value="AAA"/>
    <property type="match status" value="1"/>
</dbReference>
<dbReference type="SMART" id="SM00065">
    <property type="entry name" value="GAF"/>
    <property type="match status" value="1"/>
</dbReference>
<dbReference type="SUPFAM" id="SSF55781">
    <property type="entry name" value="GAF domain-like"/>
    <property type="match status" value="1"/>
</dbReference>
<dbReference type="SUPFAM" id="SSF46689">
    <property type="entry name" value="Homeodomain-like"/>
    <property type="match status" value="1"/>
</dbReference>
<dbReference type="SUPFAM" id="SSF52540">
    <property type="entry name" value="P-loop containing nucleoside triphosphate hydrolases"/>
    <property type="match status" value="1"/>
</dbReference>
<dbReference type="PROSITE" id="PS00675">
    <property type="entry name" value="SIGMA54_INTERACT_1"/>
    <property type="match status" value="1"/>
</dbReference>
<dbReference type="PROSITE" id="PS00676">
    <property type="entry name" value="SIGMA54_INTERACT_2"/>
    <property type="match status" value="1"/>
</dbReference>
<dbReference type="PROSITE" id="PS00688">
    <property type="entry name" value="SIGMA54_INTERACT_3"/>
    <property type="match status" value="1"/>
</dbReference>
<dbReference type="PROSITE" id="PS50045">
    <property type="entry name" value="SIGMA54_INTERACT_4"/>
    <property type="match status" value="1"/>
</dbReference>
<gene>
    <name evidence="1" type="primary">norR</name>
    <name type="ordered locus">VF_1783</name>
</gene>
<name>NORR_ALIF1</name>
<sequence length="512" mass="56767">MKNIKDEWVQIALDLTSGLSSKDRFERLLSTIRNALKCDASALLLFKNQYFSPLATNGLDGDVIGRRFAISQHPRLEAIARAGDIVRFPSDSDLPDPYDGLIANEERQLQVHSCIGLPLLVNERLIGAVTIDAFDPTQFDSFTNKELRIISALAATSLHTALLMERLENQSGENSNNSSFERSPDNHVEMIGESLAMQELQANINAVANTELSVLITGETGVGKELVASALHQRSTRAQQNLVYLNCAALPESVAESELFGHVKGAFTGAISNRKGKFESADNGTLFLDEIGELSLALQAKLLRVLQYGDIQRIGDDNHIKVNTRIIAATNKTLSDEVKNGDFRADLYHRLSVFPIFVPPLRDRGNDVTLLVGYFAEKSRIKLAATSIRITPEAITLLNDYSWPGNIRELEHVISRAAVLSRAQSDDSDLVLSPTHFLIKKENHAEKNIANQIVTPHSKNTKDLRSATDEFQANLIKKTYQEQQQNWAATARALQLDTGNLHRLAKRLNLKE</sequence>
<proteinExistence type="inferred from homology"/>
<reference key="1">
    <citation type="journal article" date="2005" name="Proc. Natl. Acad. Sci. U.S.A.">
        <title>Complete genome sequence of Vibrio fischeri: a symbiotic bacterium with pathogenic congeners.</title>
        <authorList>
            <person name="Ruby E.G."/>
            <person name="Urbanowski M."/>
            <person name="Campbell J."/>
            <person name="Dunn A."/>
            <person name="Faini M."/>
            <person name="Gunsalus R."/>
            <person name="Lostroh P."/>
            <person name="Lupp C."/>
            <person name="McCann J."/>
            <person name="Millikan D."/>
            <person name="Schaefer A."/>
            <person name="Stabb E."/>
            <person name="Stevens A."/>
            <person name="Visick K."/>
            <person name="Whistler C."/>
            <person name="Greenberg E.P."/>
        </authorList>
    </citation>
    <scope>NUCLEOTIDE SEQUENCE [LARGE SCALE GENOMIC DNA]</scope>
    <source>
        <strain>ATCC 700601 / ES114</strain>
    </source>
</reference>
<protein>
    <recommendedName>
        <fullName evidence="1">Anaerobic nitric oxide reductase transcription regulator NorR</fullName>
    </recommendedName>
</protein>
<accession>Q5E3W8</accession>
<keyword id="KW-0067">ATP-binding</keyword>
<keyword id="KW-0238">DNA-binding</keyword>
<keyword id="KW-0547">Nucleotide-binding</keyword>
<keyword id="KW-1185">Reference proteome</keyword>
<keyword id="KW-0804">Transcription</keyword>
<keyword id="KW-0805">Transcription regulation</keyword>